<organism>
    <name type="scientific">Nostoc punctiforme (strain ATCC 29133 / PCC 73102)</name>
    <dbReference type="NCBI Taxonomy" id="63737"/>
    <lineage>
        <taxon>Bacteria</taxon>
        <taxon>Bacillati</taxon>
        <taxon>Cyanobacteriota</taxon>
        <taxon>Cyanophyceae</taxon>
        <taxon>Nostocales</taxon>
        <taxon>Nostocaceae</taxon>
        <taxon>Nostoc</taxon>
    </lineage>
</organism>
<feature type="chain" id="PRO_1000088988" description="Adenine phosphoribosyltransferase">
    <location>
        <begin position="1"/>
        <end position="172"/>
    </location>
</feature>
<protein>
    <recommendedName>
        <fullName evidence="1">Adenine phosphoribosyltransferase</fullName>
        <shortName evidence="1">APRT</shortName>
        <ecNumber evidence="1">2.4.2.7</ecNumber>
    </recommendedName>
</protein>
<name>APT_NOSP7</name>
<evidence type="ECO:0000255" key="1">
    <source>
        <dbReference type="HAMAP-Rule" id="MF_00004"/>
    </source>
</evidence>
<sequence length="172" mass="19195">MDLKSLVRDIPDFPKPGILFRDITTLLRDPEGLRYTIDFLTQKCKEAEIKPDYVIGIESRGFIFGSPLAYQLGAGFIPIRKRGKLPAAVHSIEYDLEYGTDCLEVHQDALRHSSRVLIVDDLIATGGTASATAKLVQKIGCELVGFGFIIELRDLEGRKYLPDVPIISLIEY</sequence>
<gene>
    <name evidence="1" type="primary">apt</name>
    <name type="ordered locus">Npun_R0884</name>
</gene>
<dbReference type="EC" id="2.4.2.7" evidence="1"/>
<dbReference type="EMBL" id="CP001037">
    <property type="protein sequence ID" value="ACC79621.1"/>
    <property type="molecule type" value="Genomic_DNA"/>
</dbReference>
<dbReference type="RefSeq" id="WP_012407643.1">
    <property type="nucleotide sequence ID" value="NC_010628.1"/>
</dbReference>
<dbReference type="SMR" id="B2IU50"/>
<dbReference type="STRING" id="63737.Npun_R0884"/>
<dbReference type="EnsemblBacteria" id="ACC79621">
    <property type="protein sequence ID" value="ACC79621"/>
    <property type="gene ID" value="Npun_R0884"/>
</dbReference>
<dbReference type="KEGG" id="npu:Npun_R0884"/>
<dbReference type="eggNOG" id="COG0503">
    <property type="taxonomic scope" value="Bacteria"/>
</dbReference>
<dbReference type="HOGENOM" id="CLU_063339_3_0_3"/>
<dbReference type="OrthoDB" id="9803963at2"/>
<dbReference type="PhylomeDB" id="B2IU50"/>
<dbReference type="UniPathway" id="UPA00588">
    <property type="reaction ID" value="UER00646"/>
</dbReference>
<dbReference type="Proteomes" id="UP000001191">
    <property type="component" value="Chromosome"/>
</dbReference>
<dbReference type="GO" id="GO:0005737">
    <property type="term" value="C:cytoplasm"/>
    <property type="evidence" value="ECO:0007669"/>
    <property type="project" value="UniProtKB-SubCell"/>
</dbReference>
<dbReference type="GO" id="GO:0002055">
    <property type="term" value="F:adenine binding"/>
    <property type="evidence" value="ECO:0007669"/>
    <property type="project" value="TreeGrafter"/>
</dbReference>
<dbReference type="GO" id="GO:0003999">
    <property type="term" value="F:adenine phosphoribosyltransferase activity"/>
    <property type="evidence" value="ECO:0007669"/>
    <property type="project" value="UniProtKB-UniRule"/>
</dbReference>
<dbReference type="GO" id="GO:0016208">
    <property type="term" value="F:AMP binding"/>
    <property type="evidence" value="ECO:0007669"/>
    <property type="project" value="TreeGrafter"/>
</dbReference>
<dbReference type="GO" id="GO:0006168">
    <property type="term" value="P:adenine salvage"/>
    <property type="evidence" value="ECO:0007669"/>
    <property type="project" value="InterPro"/>
</dbReference>
<dbReference type="GO" id="GO:0044209">
    <property type="term" value="P:AMP salvage"/>
    <property type="evidence" value="ECO:0007669"/>
    <property type="project" value="UniProtKB-UniRule"/>
</dbReference>
<dbReference type="GO" id="GO:0006166">
    <property type="term" value="P:purine ribonucleoside salvage"/>
    <property type="evidence" value="ECO:0007669"/>
    <property type="project" value="UniProtKB-KW"/>
</dbReference>
<dbReference type="CDD" id="cd06223">
    <property type="entry name" value="PRTases_typeI"/>
    <property type="match status" value="1"/>
</dbReference>
<dbReference type="FunFam" id="3.40.50.2020:FF:000004">
    <property type="entry name" value="Adenine phosphoribosyltransferase"/>
    <property type="match status" value="1"/>
</dbReference>
<dbReference type="Gene3D" id="3.40.50.2020">
    <property type="match status" value="1"/>
</dbReference>
<dbReference type="HAMAP" id="MF_00004">
    <property type="entry name" value="Aden_phosphoribosyltr"/>
    <property type="match status" value="1"/>
</dbReference>
<dbReference type="InterPro" id="IPR005764">
    <property type="entry name" value="Ade_phspho_trans"/>
</dbReference>
<dbReference type="InterPro" id="IPR000836">
    <property type="entry name" value="PRibTrfase_dom"/>
</dbReference>
<dbReference type="InterPro" id="IPR029057">
    <property type="entry name" value="PRTase-like"/>
</dbReference>
<dbReference type="InterPro" id="IPR050054">
    <property type="entry name" value="UPRTase/APRTase"/>
</dbReference>
<dbReference type="NCBIfam" id="TIGR01090">
    <property type="entry name" value="apt"/>
    <property type="match status" value="1"/>
</dbReference>
<dbReference type="NCBIfam" id="NF002634">
    <property type="entry name" value="PRK02304.1-3"/>
    <property type="match status" value="1"/>
</dbReference>
<dbReference type="NCBIfam" id="NF002636">
    <property type="entry name" value="PRK02304.1-5"/>
    <property type="match status" value="1"/>
</dbReference>
<dbReference type="PANTHER" id="PTHR32315">
    <property type="entry name" value="ADENINE PHOSPHORIBOSYLTRANSFERASE"/>
    <property type="match status" value="1"/>
</dbReference>
<dbReference type="PANTHER" id="PTHR32315:SF3">
    <property type="entry name" value="ADENINE PHOSPHORIBOSYLTRANSFERASE"/>
    <property type="match status" value="1"/>
</dbReference>
<dbReference type="Pfam" id="PF00156">
    <property type="entry name" value="Pribosyltran"/>
    <property type="match status" value="1"/>
</dbReference>
<dbReference type="SUPFAM" id="SSF53271">
    <property type="entry name" value="PRTase-like"/>
    <property type="match status" value="1"/>
</dbReference>
<dbReference type="PROSITE" id="PS00103">
    <property type="entry name" value="PUR_PYR_PR_TRANSFER"/>
    <property type="match status" value="1"/>
</dbReference>
<accession>B2IU50</accession>
<keyword id="KW-0963">Cytoplasm</keyword>
<keyword id="KW-0328">Glycosyltransferase</keyword>
<keyword id="KW-0660">Purine salvage</keyword>
<keyword id="KW-1185">Reference proteome</keyword>
<keyword id="KW-0808">Transferase</keyword>
<comment type="function">
    <text evidence="1">Catalyzes a salvage reaction resulting in the formation of AMP, that is energically less costly than de novo synthesis.</text>
</comment>
<comment type="catalytic activity">
    <reaction evidence="1">
        <text>AMP + diphosphate = 5-phospho-alpha-D-ribose 1-diphosphate + adenine</text>
        <dbReference type="Rhea" id="RHEA:16609"/>
        <dbReference type="ChEBI" id="CHEBI:16708"/>
        <dbReference type="ChEBI" id="CHEBI:33019"/>
        <dbReference type="ChEBI" id="CHEBI:58017"/>
        <dbReference type="ChEBI" id="CHEBI:456215"/>
        <dbReference type="EC" id="2.4.2.7"/>
    </reaction>
</comment>
<comment type="pathway">
    <text evidence="1">Purine metabolism; AMP biosynthesis via salvage pathway; AMP from adenine: step 1/1.</text>
</comment>
<comment type="subunit">
    <text evidence="1">Homodimer.</text>
</comment>
<comment type="subcellular location">
    <subcellularLocation>
        <location evidence="1">Cytoplasm</location>
    </subcellularLocation>
</comment>
<comment type="similarity">
    <text evidence="1">Belongs to the purine/pyrimidine phosphoribosyltransferase family.</text>
</comment>
<proteinExistence type="inferred from homology"/>
<reference key="1">
    <citation type="journal article" date="2013" name="Plant Physiol.">
        <title>A Nostoc punctiforme Sugar Transporter Necessary to Establish a Cyanobacterium-Plant Symbiosis.</title>
        <authorList>
            <person name="Ekman M."/>
            <person name="Picossi S."/>
            <person name="Campbell E.L."/>
            <person name="Meeks J.C."/>
            <person name="Flores E."/>
        </authorList>
    </citation>
    <scope>NUCLEOTIDE SEQUENCE [LARGE SCALE GENOMIC DNA]</scope>
    <source>
        <strain>ATCC 29133 / PCC 73102</strain>
    </source>
</reference>